<keyword id="KW-0963">Cytoplasm</keyword>
<keyword id="KW-0378">Hydrolase</keyword>
<keyword id="KW-1185">Reference proteome</keyword>
<proteinExistence type="inferred from homology"/>
<reference key="1">
    <citation type="journal article" date="1997" name="Nature">
        <title>The complete genome sequence of the gastric pathogen Helicobacter pylori.</title>
        <authorList>
            <person name="Tomb J.-F."/>
            <person name="White O."/>
            <person name="Kerlavage A.R."/>
            <person name="Clayton R.A."/>
            <person name="Sutton G.G."/>
            <person name="Fleischmann R.D."/>
            <person name="Ketchum K.A."/>
            <person name="Klenk H.-P."/>
            <person name="Gill S.R."/>
            <person name="Dougherty B.A."/>
            <person name="Nelson K.E."/>
            <person name="Quackenbush J."/>
            <person name="Zhou L."/>
            <person name="Kirkness E.F."/>
            <person name="Peterson S.N."/>
            <person name="Loftus B.J."/>
            <person name="Richardson D.L."/>
            <person name="Dodson R.J."/>
            <person name="Khalak H.G."/>
            <person name="Glodek A."/>
            <person name="McKenney K."/>
            <person name="FitzGerald L.M."/>
            <person name="Lee N."/>
            <person name="Adams M.D."/>
            <person name="Hickey E.K."/>
            <person name="Berg D.E."/>
            <person name="Gocayne J.D."/>
            <person name="Utterback T.R."/>
            <person name="Peterson J.D."/>
            <person name="Kelley J.M."/>
            <person name="Cotton M.D."/>
            <person name="Weidman J.F."/>
            <person name="Fujii C."/>
            <person name="Bowman C."/>
            <person name="Watthey L."/>
            <person name="Wallin E."/>
            <person name="Hayes W.S."/>
            <person name="Borodovsky M."/>
            <person name="Karp P.D."/>
            <person name="Smith H.O."/>
            <person name="Fraser C.M."/>
            <person name="Venter J.C."/>
        </authorList>
    </citation>
    <scope>NUCLEOTIDE SEQUENCE [LARGE SCALE GENOMIC DNA]</scope>
    <source>
        <strain>ATCC 700392 / 26695</strain>
    </source>
</reference>
<sequence>MAQNLPTIALLATGGTIAGSGASASLGSYKSGELGIKELLKAIPSLNRLARIQGEQISNIGSQDMNEEVWFKLAKRAQELLDDSRIQGVVITHGTDTLEESAYFLNLVLRSTKPVVLVGAMRNAASLSADGALNLYNAVSVALNEKSANKGVLVVMDDNIFSAREVIKTHTTHTSTFKALNSGAIGSVYYGKTRYYMQPLRKHTTESEFSLSQLKTPLPKVDIIYTHAGMTPDLFQASLNSHAKGVVIAGVGNGNVSAGFLKAMQEASQMGVVIVRSSRVNSGEITSGEIDDKAFITSDNLNPQKARVLLQLALTKTNNKEKIQEMFEEY</sequence>
<accession>O25424</accession>
<evidence type="ECO:0000250" key="1"/>
<evidence type="ECO:0000255" key="2">
    <source>
        <dbReference type="PROSITE-ProRule" id="PRU01068"/>
    </source>
</evidence>
<evidence type="ECO:0000255" key="3">
    <source>
        <dbReference type="PROSITE-ProRule" id="PRU10099"/>
    </source>
</evidence>
<evidence type="ECO:0000255" key="4">
    <source>
        <dbReference type="PROSITE-ProRule" id="PRU10100"/>
    </source>
</evidence>
<evidence type="ECO:0000305" key="5"/>
<dbReference type="EC" id="3.5.1.1"/>
<dbReference type="EMBL" id="AE000511">
    <property type="protein sequence ID" value="AAD07772.1"/>
    <property type="molecule type" value="Genomic_DNA"/>
</dbReference>
<dbReference type="PIR" id="C64610">
    <property type="entry name" value="C64610"/>
</dbReference>
<dbReference type="RefSeq" id="NP_207517.1">
    <property type="nucleotide sequence ID" value="NC_000915.1"/>
</dbReference>
<dbReference type="SMR" id="O25424"/>
<dbReference type="DIP" id="DIP-3115N"/>
<dbReference type="FunCoup" id="O25424">
    <property type="interactions" value="82"/>
</dbReference>
<dbReference type="IntAct" id="O25424">
    <property type="interactions" value="2"/>
</dbReference>
<dbReference type="MINT" id="O25424"/>
<dbReference type="STRING" id="85962.HP_0723"/>
<dbReference type="PaxDb" id="85962-C694_03720"/>
<dbReference type="EnsemblBacteria" id="AAD07772">
    <property type="protein sequence ID" value="AAD07772"/>
    <property type="gene ID" value="HP_0723"/>
</dbReference>
<dbReference type="KEGG" id="heo:C694_03720"/>
<dbReference type="KEGG" id="hpy:HP_0723"/>
<dbReference type="PATRIC" id="fig|85962.47.peg.772"/>
<dbReference type="eggNOG" id="COG0252">
    <property type="taxonomic scope" value="Bacteria"/>
</dbReference>
<dbReference type="InParanoid" id="O25424"/>
<dbReference type="OrthoDB" id="9788068at2"/>
<dbReference type="PhylomeDB" id="O25424"/>
<dbReference type="Proteomes" id="UP000000429">
    <property type="component" value="Chromosome"/>
</dbReference>
<dbReference type="GO" id="GO:0005737">
    <property type="term" value="C:cytoplasm"/>
    <property type="evidence" value="ECO:0007669"/>
    <property type="project" value="UniProtKB-SubCell"/>
</dbReference>
<dbReference type="GO" id="GO:0004067">
    <property type="term" value="F:asparaginase activity"/>
    <property type="evidence" value="ECO:0007669"/>
    <property type="project" value="UniProtKB-EC"/>
</dbReference>
<dbReference type="GO" id="GO:0006528">
    <property type="term" value="P:asparagine metabolic process"/>
    <property type="evidence" value="ECO:0007669"/>
    <property type="project" value="InterPro"/>
</dbReference>
<dbReference type="CDD" id="cd08964">
    <property type="entry name" value="L-asparaginase_II"/>
    <property type="match status" value="1"/>
</dbReference>
<dbReference type="FunFam" id="3.40.50.1170:FF:000001">
    <property type="entry name" value="L-asparaginase 2"/>
    <property type="match status" value="1"/>
</dbReference>
<dbReference type="Gene3D" id="3.40.50.40">
    <property type="match status" value="1"/>
</dbReference>
<dbReference type="Gene3D" id="3.40.50.1170">
    <property type="entry name" value="L-asparaginase, N-terminal domain"/>
    <property type="match status" value="1"/>
</dbReference>
<dbReference type="InterPro" id="IPR004550">
    <property type="entry name" value="AsnASE_II"/>
</dbReference>
<dbReference type="InterPro" id="IPR036152">
    <property type="entry name" value="Asp/glu_Ase-like_sf"/>
</dbReference>
<dbReference type="InterPro" id="IPR006034">
    <property type="entry name" value="Asparaginase/glutaminase-like"/>
</dbReference>
<dbReference type="InterPro" id="IPR020827">
    <property type="entry name" value="Asparaginase/glutaminase_AS1"/>
</dbReference>
<dbReference type="InterPro" id="IPR027475">
    <property type="entry name" value="Asparaginase/glutaminase_AS2"/>
</dbReference>
<dbReference type="InterPro" id="IPR040919">
    <property type="entry name" value="Asparaginase_C"/>
</dbReference>
<dbReference type="InterPro" id="IPR027473">
    <property type="entry name" value="L-asparaginase_C"/>
</dbReference>
<dbReference type="InterPro" id="IPR027474">
    <property type="entry name" value="L-asparaginase_N"/>
</dbReference>
<dbReference type="InterPro" id="IPR037152">
    <property type="entry name" value="L-asparaginase_N_sf"/>
</dbReference>
<dbReference type="NCBIfam" id="TIGR00520">
    <property type="entry name" value="asnASE_II"/>
    <property type="match status" value="1"/>
</dbReference>
<dbReference type="PANTHER" id="PTHR11707:SF28">
    <property type="entry name" value="60 KDA LYSOPHOSPHOLIPASE"/>
    <property type="match status" value="1"/>
</dbReference>
<dbReference type="PANTHER" id="PTHR11707">
    <property type="entry name" value="L-ASPARAGINASE"/>
    <property type="match status" value="1"/>
</dbReference>
<dbReference type="Pfam" id="PF00710">
    <property type="entry name" value="Asparaginase"/>
    <property type="match status" value="1"/>
</dbReference>
<dbReference type="Pfam" id="PF17763">
    <property type="entry name" value="Asparaginase_C"/>
    <property type="match status" value="1"/>
</dbReference>
<dbReference type="PIRSF" id="PIRSF001220">
    <property type="entry name" value="L-ASNase_gatD"/>
    <property type="match status" value="1"/>
</dbReference>
<dbReference type="PIRSF" id="PIRSF500176">
    <property type="entry name" value="L_ASNase"/>
    <property type="match status" value="1"/>
</dbReference>
<dbReference type="PRINTS" id="PR00139">
    <property type="entry name" value="ASNGLNASE"/>
</dbReference>
<dbReference type="SMART" id="SM00870">
    <property type="entry name" value="Asparaginase"/>
    <property type="match status" value="1"/>
</dbReference>
<dbReference type="SUPFAM" id="SSF53774">
    <property type="entry name" value="Glutaminase/Asparaginase"/>
    <property type="match status" value="1"/>
</dbReference>
<dbReference type="PROSITE" id="PS00144">
    <property type="entry name" value="ASN_GLN_ASE_1"/>
    <property type="match status" value="1"/>
</dbReference>
<dbReference type="PROSITE" id="PS00917">
    <property type="entry name" value="ASN_GLN_ASE_2"/>
    <property type="match status" value="1"/>
</dbReference>
<dbReference type="PROSITE" id="PS51732">
    <property type="entry name" value="ASN_GLN_ASE_3"/>
    <property type="match status" value="1"/>
</dbReference>
<comment type="catalytic activity">
    <reaction>
        <text>L-asparagine + H2O = L-aspartate + NH4(+)</text>
        <dbReference type="Rhea" id="RHEA:21016"/>
        <dbReference type="ChEBI" id="CHEBI:15377"/>
        <dbReference type="ChEBI" id="CHEBI:28938"/>
        <dbReference type="ChEBI" id="CHEBI:29991"/>
        <dbReference type="ChEBI" id="CHEBI:58048"/>
        <dbReference type="EC" id="3.5.1.1"/>
    </reaction>
</comment>
<comment type="subcellular location">
    <subcellularLocation>
        <location evidence="5">Cytoplasm</location>
    </subcellularLocation>
</comment>
<comment type="similarity">
    <text evidence="5">Belongs to the asparaginase 1 family.</text>
</comment>
<gene>
    <name type="primary">ansA</name>
    <name type="synonym">asn</name>
    <name type="ordered locus">HP_0723</name>
</gene>
<protein>
    <recommendedName>
        <fullName>Probable L-asparaginase</fullName>
        <shortName>L-ASNase</shortName>
        <ecNumber>3.5.1.1</ecNumber>
    </recommendedName>
    <alternativeName>
        <fullName>L-asparagine amidohydrolase</fullName>
    </alternativeName>
</protein>
<organism>
    <name type="scientific">Helicobacter pylori (strain ATCC 700392 / 26695)</name>
    <name type="common">Campylobacter pylori</name>
    <dbReference type="NCBI Taxonomy" id="85962"/>
    <lineage>
        <taxon>Bacteria</taxon>
        <taxon>Pseudomonadati</taxon>
        <taxon>Campylobacterota</taxon>
        <taxon>Epsilonproteobacteria</taxon>
        <taxon>Campylobacterales</taxon>
        <taxon>Helicobacteraceae</taxon>
        <taxon>Helicobacter</taxon>
    </lineage>
</organism>
<feature type="chain" id="PRO_0000171081" description="Probable L-asparaginase">
    <location>
        <begin position="1"/>
        <end position="330"/>
    </location>
</feature>
<feature type="domain" description="Asparaginase/glutaminase" evidence="2">
    <location>
        <begin position="6"/>
        <end position="330"/>
    </location>
</feature>
<feature type="active site" description="O-isoaspartyl threonine intermediate" evidence="3 4">
    <location>
        <position position="16"/>
    </location>
</feature>
<feature type="binding site" evidence="1">
    <location>
        <position position="62"/>
    </location>
    <ligand>
        <name>substrate</name>
    </ligand>
</feature>
<feature type="binding site" evidence="1">
    <location>
        <begin position="95"/>
        <end position="96"/>
    </location>
    <ligand>
        <name>substrate</name>
    </ligand>
</feature>
<name>ASPG_HELPY</name>